<dbReference type="EMBL" id="AE013599">
    <property type="protein sequence ID" value="AAF59097.2"/>
    <property type="molecule type" value="Genomic_DNA"/>
</dbReference>
<dbReference type="EMBL" id="BT012433">
    <property type="protein sequence ID" value="AAS93704.1"/>
    <property type="status" value="ALT_FRAME"/>
    <property type="molecule type" value="mRNA"/>
</dbReference>
<dbReference type="RefSeq" id="NP_610379.2">
    <property type="nucleotide sequence ID" value="NM_136535.3"/>
</dbReference>
<dbReference type="SMR" id="Q9V4S8"/>
<dbReference type="BioGRID" id="61669">
    <property type="interactions" value="10"/>
</dbReference>
<dbReference type="ComplexPortal" id="CPX-7964">
    <property type="entry name" value="COP9 signalosome complex, testis-specific variant"/>
</dbReference>
<dbReference type="ComplexPortal" id="CPX-7974">
    <property type="entry name" value="COP9 signalosome complex"/>
</dbReference>
<dbReference type="DIP" id="DIP-22982N"/>
<dbReference type="FunCoup" id="Q9V4S8">
    <property type="interactions" value="1961"/>
</dbReference>
<dbReference type="IntAct" id="Q9V4S8">
    <property type="interactions" value="10"/>
</dbReference>
<dbReference type="STRING" id="7227.FBpp0087821"/>
<dbReference type="MoonProt" id="Q9V4S8"/>
<dbReference type="iPTMnet" id="Q9V4S8"/>
<dbReference type="PaxDb" id="7227-FBpp0087821"/>
<dbReference type="DNASU" id="35816"/>
<dbReference type="EnsemblMetazoa" id="FBtr0088742">
    <property type="protein sequence ID" value="FBpp0087821"/>
    <property type="gene ID" value="FBgn0028836"/>
</dbReference>
<dbReference type="GeneID" id="35816"/>
<dbReference type="KEGG" id="dme:Dmel_CG2038"/>
<dbReference type="AGR" id="FB:FBgn0028836"/>
<dbReference type="CTD" id="35816"/>
<dbReference type="FlyBase" id="FBgn0028836">
    <property type="gene designation" value="CSN7"/>
</dbReference>
<dbReference type="VEuPathDB" id="VectorBase:FBgn0028836"/>
<dbReference type="eggNOG" id="KOG3250">
    <property type="taxonomic scope" value="Eukaryota"/>
</dbReference>
<dbReference type="GeneTree" id="ENSGT00940000169585"/>
<dbReference type="HOGENOM" id="CLU_054426_2_0_1"/>
<dbReference type="InParanoid" id="Q9V4S8"/>
<dbReference type="OMA" id="GTYKQFR"/>
<dbReference type="OrthoDB" id="10265275at2759"/>
<dbReference type="PhylomeDB" id="Q9V4S8"/>
<dbReference type="Reactome" id="R-DME-5696394">
    <property type="pathway name" value="DNA Damage Recognition in GG-NER"/>
</dbReference>
<dbReference type="Reactome" id="R-DME-6781823">
    <property type="pathway name" value="Formation of TC-NER Pre-Incision Complex"/>
</dbReference>
<dbReference type="Reactome" id="R-DME-8856825">
    <property type="pathway name" value="Cargo recognition for clathrin-mediated endocytosis"/>
</dbReference>
<dbReference type="Reactome" id="R-DME-8951664">
    <property type="pathway name" value="Neddylation"/>
</dbReference>
<dbReference type="SignaLink" id="Q9V4S8"/>
<dbReference type="BioGRID-ORCS" id="35816">
    <property type="hits" value="1 hit in 3 CRISPR screens"/>
</dbReference>
<dbReference type="ChiTaRS" id="CSN7">
    <property type="organism name" value="fly"/>
</dbReference>
<dbReference type="GenomeRNAi" id="35816"/>
<dbReference type="PRO" id="PR:Q9V4S8"/>
<dbReference type="Proteomes" id="UP000000803">
    <property type="component" value="Chromosome 2R"/>
</dbReference>
<dbReference type="Bgee" id="FBgn0028836">
    <property type="expression patterns" value="Expressed in T neuron T5a (Drosophila) in embryonic/larval optic lobe (Drosophila) and 150 other cell types or tissues"/>
</dbReference>
<dbReference type="ExpressionAtlas" id="Q9V4S8">
    <property type="expression patterns" value="baseline and differential"/>
</dbReference>
<dbReference type="GO" id="GO:0008180">
    <property type="term" value="C:COP9 signalosome"/>
    <property type="evidence" value="ECO:0000314"/>
    <property type="project" value="FlyBase"/>
</dbReference>
<dbReference type="GO" id="GO:0005737">
    <property type="term" value="C:cytoplasm"/>
    <property type="evidence" value="ECO:0007669"/>
    <property type="project" value="UniProtKB-SubCell"/>
</dbReference>
<dbReference type="GO" id="GO:0034399">
    <property type="term" value="C:nuclear periphery"/>
    <property type="evidence" value="ECO:0000314"/>
    <property type="project" value="FlyBase"/>
</dbReference>
<dbReference type="GO" id="GO:0010387">
    <property type="term" value="P:COP9 signalosome assembly"/>
    <property type="evidence" value="ECO:0007669"/>
    <property type="project" value="InterPro"/>
</dbReference>
<dbReference type="GO" id="GO:0036099">
    <property type="term" value="P:female germ-line stem cell population maintenance"/>
    <property type="evidence" value="ECO:0000315"/>
    <property type="project" value="FlyBase"/>
</dbReference>
<dbReference type="GO" id="GO:0007281">
    <property type="term" value="P:germ cell development"/>
    <property type="evidence" value="ECO:0000315"/>
    <property type="project" value="FlyBase"/>
</dbReference>
<dbReference type="GO" id="GO:0048142">
    <property type="term" value="P:germarium-derived cystoblast division"/>
    <property type="evidence" value="ECO:0000315"/>
    <property type="project" value="FlyBase"/>
</dbReference>
<dbReference type="GO" id="GO:0048140">
    <property type="term" value="P:male germ-line cyst encapsulation"/>
    <property type="evidence" value="ECO:0000315"/>
    <property type="project" value="FlyBase"/>
</dbReference>
<dbReference type="GO" id="GO:0000338">
    <property type="term" value="P:protein deneddylation"/>
    <property type="evidence" value="ECO:0000250"/>
    <property type="project" value="FlyBase"/>
</dbReference>
<dbReference type="GO" id="GO:0050821">
    <property type="term" value="P:protein stabilization"/>
    <property type="evidence" value="ECO:0000315"/>
    <property type="project" value="FlyBase"/>
</dbReference>
<dbReference type="InterPro" id="IPR045237">
    <property type="entry name" value="COPS7/eIF3m"/>
</dbReference>
<dbReference type="InterPro" id="IPR041481">
    <property type="entry name" value="CSN7_helixI"/>
</dbReference>
<dbReference type="InterPro" id="IPR000717">
    <property type="entry name" value="PCI_dom"/>
</dbReference>
<dbReference type="PANTHER" id="PTHR15350:SF5">
    <property type="entry name" value="COP9 SIGNALOSOME COMPLEX SUBUNIT 7"/>
    <property type="match status" value="1"/>
</dbReference>
<dbReference type="PANTHER" id="PTHR15350">
    <property type="entry name" value="COP9 SIGNALOSOME COMPLEX SUBUNIT 7/DENDRITIC CELL PROTEIN GA17"/>
    <property type="match status" value="1"/>
</dbReference>
<dbReference type="Pfam" id="PF22061">
    <property type="entry name" value="CSN7_HB_subdom"/>
    <property type="match status" value="1"/>
</dbReference>
<dbReference type="Pfam" id="PF18392">
    <property type="entry name" value="CSN7a_helixI"/>
    <property type="match status" value="1"/>
</dbReference>
<dbReference type="Pfam" id="PF01399">
    <property type="entry name" value="PCI"/>
    <property type="match status" value="1"/>
</dbReference>
<dbReference type="SMART" id="SM00088">
    <property type="entry name" value="PINT"/>
    <property type="match status" value="1"/>
</dbReference>
<dbReference type="PROSITE" id="PS50250">
    <property type="entry name" value="PCI"/>
    <property type="match status" value="1"/>
</dbReference>
<keyword id="KW-0963">Cytoplasm</keyword>
<keyword id="KW-0217">Developmental protein</keyword>
<keyword id="KW-0221">Differentiation</keyword>
<keyword id="KW-0539">Nucleus</keyword>
<keyword id="KW-0896">Oogenesis</keyword>
<keyword id="KW-0597">Phosphoprotein</keyword>
<keyword id="KW-1185">Reference proteome</keyword>
<keyword id="KW-0736">Signalosome</keyword>
<organism>
    <name type="scientific">Drosophila melanogaster</name>
    <name type="common">Fruit fly</name>
    <dbReference type="NCBI Taxonomy" id="7227"/>
    <lineage>
        <taxon>Eukaryota</taxon>
        <taxon>Metazoa</taxon>
        <taxon>Ecdysozoa</taxon>
        <taxon>Arthropoda</taxon>
        <taxon>Hexapoda</taxon>
        <taxon>Insecta</taxon>
        <taxon>Pterygota</taxon>
        <taxon>Neoptera</taxon>
        <taxon>Endopterygota</taxon>
        <taxon>Diptera</taxon>
        <taxon>Brachycera</taxon>
        <taxon>Muscomorpha</taxon>
        <taxon>Ephydroidea</taxon>
        <taxon>Drosophilidae</taxon>
        <taxon>Drosophila</taxon>
        <taxon>Sophophora</taxon>
    </lineage>
</organism>
<feature type="chain" id="PRO_0000121002" description="COP9 signalosome complex subunit 7">
    <location>
        <begin position="1"/>
        <end position="278"/>
    </location>
</feature>
<feature type="domain" description="PCI" evidence="1">
    <location>
        <begin position="1"/>
        <end position="167"/>
    </location>
</feature>
<feature type="region of interest" description="Disordered" evidence="2">
    <location>
        <begin position="233"/>
        <end position="278"/>
    </location>
</feature>
<feature type="modified residue" description="Phosphoserine" evidence="5">
    <location>
        <position position="233"/>
    </location>
</feature>
<feature type="modified residue" description="Phosphoserine" evidence="5">
    <location>
        <position position="235"/>
    </location>
</feature>
<feature type="modified residue" description="Phosphoserine" evidence="5">
    <location>
        <position position="238"/>
    </location>
</feature>
<feature type="modified residue" description="Phosphoserine" evidence="5">
    <location>
        <position position="249"/>
    </location>
</feature>
<comment type="function">
    <text evidence="4">Component of the COP9 signalosome complex (CSN), a complex involved in various cellular and developmental processes. The CSN complex is an essential regulator of the ubiquitin (Ubl) conjugation pathway by mediating the deneddylation of the cullin subunits of the SCF-type E3 ligase complexes, leading to decrease the Ubl ligase activity of SCF. The CSN complex plays an essential role in oogenesis and embryogenesis and is required for proper photoreceptor R cell differentiation and promote lamina glial cell migration or axon targeting. It also promotes Ubl-dependent degradation of cyclin E (CycE) during early oogenesis.</text>
</comment>
<comment type="subunit">
    <text evidence="3">Component of the CSN complex, probably composed of CSN1b, alien/CSN2, CSN3, CSN4, CSN5, CSN6, CSN7 and CSN8. In the complex, it probably interacts directly with CSN2 and CSN4.</text>
</comment>
<comment type="interaction">
    <interactant intactId="EBI-155199">
        <id>Q9V4S8</id>
    </interactant>
    <interactant intactId="EBI-141466">
        <id>Q9V345</id>
        <label>CSN4</label>
    </interactant>
    <organismsDiffer>false</organismsDiffer>
    <experiments>2</experiments>
</comment>
<comment type="interaction">
    <interactant intactId="EBI-155199">
        <id>Q9V4S8</id>
    </interactant>
    <interactant intactId="EBI-183494">
        <id>Q9VCY3</id>
        <label>CSN6</label>
    </interactant>
    <organismsDiffer>false</organismsDiffer>
    <experiments>2</experiments>
</comment>
<comment type="subcellular location">
    <subcellularLocation>
        <location evidence="7">Cytoplasm</location>
    </subcellularLocation>
    <subcellularLocation>
        <location evidence="7">Nucleus</location>
    </subcellularLocation>
</comment>
<comment type="domain">
    <text>The PCI domain is necessary and sufficient for the interactions with other CSN subunits of the complex.</text>
</comment>
<comment type="similarity">
    <text evidence="6">Belongs to the CSN7/EIF3M family. CSN7 subfamily.</text>
</comment>
<comment type="sequence caution" evidence="6">
    <conflict type="frameshift">
        <sequence resource="EMBL-CDS" id="AAS93704"/>
    </conflict>
</comment>
<accession>Q9V4S8</accession>
<accession>Q6NLA1</accession>
<proteinExistence type="evidence at protein level"/>
<sequence>MTQDMLLGNEEPSKSKETFLEKFCVLAKSSTGAALLDVIRQALEAPNVFVFGELLAEPSVLQLKDGPDSKHFETLNLFAYGTYKEYRAQPEKFIELTPAMQKKLQHLTIVSLAIKAKSIPYALLLSELEIDNVRHLEDIIIEAIYADIIHGKLFQNTRILEVDYAQGRDIPPGYTGQIVETLQAWVNSCDSVSNCIEMQIKYANAEKSKRLINKERVEQDLINLKKVLKSQTSDSDESMQIDTHGPGTSGGLGQSELRKKPSKLRNPRSAAVGLKFSK</sequence>
<reference key="1">
    <citation type="journal article" date="2000" name="Science">
        <title>The genome sequence of Drosophila melanogaster.</title>
        <authorList>
            <person name="Adams M.D."/>
            <person name="Celniker S.E."/>
            <person name="Holt R.A."/>
            <person name="Evans C.A."/>
            <person name="Gocayne J.D."/>
            <person name="Amanatides P.G."/>
            <person name="Scherer S.E."/>
            <person name="Li P.W."/>
            <person name="Hoskins R.A."/>
            <person name="Galle R.F."/>
            <person name="George R.A."/>
            <person name="Lewis S.E."/>
            <person name="Richards S."/>
            <person name="Ashburner M."/>
            <person name="Henderson S.N."/>
            <person name="Sutton G.G."/>
            <person name="Wortman J.R."/>
            <person name="Yandell M.D."/>
            <person name="Zhang Q."/>
            <person name="Chen L.X."/>
            <person name="Brandon R.C."/>
            <person name="Rogers Y.-H.C."/>
            <person name="Blazej R.G."/>
            <person name="Champe M."/>
            <person name="Pfeiffer B.D."/>
            <person name="Wan K.H."/>
            <person name="Doyle C."/>
            <person name="Baxter E.G."/>
            <person name="Helt G."/>
            <person name="Nelson C.R."/>
            <person name="Miklos G.L.G."/>
            <person name="Abril J.F."/>
            <person name="Agbayani A."/>
            <person name="An H.-J."/>
            <person name="Andrews-Pfannkoch C."/>
            <person name="Baldwin D."/>
            <person name="Ballew R.M."/>
            <person name="Basu A."/>
            <person name="Baxendale J."/>
            <person name="Bayraktaroglu L."/>
            <person name="Beasley E.M."/>
            <person name="Beeson K.Y."/>
            <person name="Benos P.V."/>
            <person name="Berman B.P."/>
            <person name="Bhandari D."/>
            <person name="Bolshakov S."/>
            <person name="Borkova D."/>
            <person name="Botchan M.R."/>
            <person name="Bouck J."/>
            <person name="Brokstein P."/>
            <person name="Brottier P."/>
            <person name="Burtis K.C."/>
            <person name="Busam D.A."/>
            <person name="Butler H."/>
            <person name="Cadieu E."/>
            <person name="Center A."/>
            <person name="Chandra I."/>
            <person name="Cherry J.M."/>
            <person name="Cawley S."/>
            <person name="Dahlke C."/>
            <person name="Davenport L.B."/>
            <person name="Davies P."/>
            <person name="de Pablos B."/>
            <person name="Delcher A."/>
            <person name="Deng Z."/>
            <person name="Mays A.D."/>
            <person name="Dew I."/>
            <person name="Dietz S.M."/>
            <person name="Dodson K."/>
            <person name="Doup L.E."/>
            <person name="Downes M."/>
            <person name="Dugan-Rocha S."/>
            <person name="Dunkov B.C."/>
            <person name="Dunn P."/>
            <person name="Durbin K.J."/>
            <person name="Evangelista C.C."/>
            <person name="Ferraz C."/>
            <person name="Ferriera S."/>
            <person name="Fleischmann W."/>
            <person name="Fosler C."/>
            <person name="Gabrielian A.E."/>
            <person name="Garg N.S."/>
            <person name="Gelbart W.M."/>
            <person name="Glasser K."/>
            <person name="Glodek A."/>
            <person name="Gong F."/>
            <person name="Gorrell J.H."/>
            <person name="Gu Z."/>
            <person name="Guan P."/>
            <person name="Harris M."/>
            <person name="Harris N.L."/>
            <person name="Harvey D.A."/>
            <person name="Heiman T.J."/>
            <person name="Hernandez J.R."/>
            <person name="Houck J."/>
            <person name="Hostin D."/>
            <person name="Houston K.A."/>
            <person name="Howland T.J."/>
            <person name="Wei M.-H."/>
            <person name="Ibegwam C."/>
            <person name="Jalali M."/>
            <person name="Kalush F."/>
            <person name="Karpen G.H."/>
            <person name="Ke Z."/>
            <person name="Kennison J.A."/>
            <person name="Ketchum K.A."/>
            <person name="Kimmel B.E."/>
            <person name="Kodira C.D."/>
            <person name="Kraft C.L."/>
            <person name="Kravitz S."/>
            <person name="Kulp D."/>
            <person name="Lai Z."/>
            <person name="Lasko P."/>
            <person name="Lei Y."/>
            <person name="Levitsky A.A."/>
            <person name="Li J.H."/>
            <person name="Li Z."/>
            <person name="Liang Y."/>
            <person name="Lin X."/>
            <person name="Liu X."/>
            <person name="Mattei B."/>
            <person name="McIntosh T.C."/>
            <person name="McLeod M.P."/>
            <person name="McPherson D."/>
            <person name="Merkulov G."/>
            <person name="Milshina N.V."/>
            <person name="Mobarry C."/>
            <person name="Morris J."/>
            <person name="Moshrefi A."/>
            <person name="Mount S.M."/>
            <person name="Moy M."/>
            <person name="Murphy B."/>
            <person name="Murphy L."/>
            <person name="Muzny D.M."/>
            <person name="Nelson D.L."/>
            <person name="Nelson D.R."/>
            <person name="Nelson K.A."/>
            <person name="Nixon K."/>
            <person name="Nusskern D.R."/>
            <person name="Pacleb J.M."/>
            <person name="Palazzolo M."/>
            <person name="Pittman G.S."/>
            <person name="Pan S."/>
            <person name="Pollard J."/>
            <person name="Puri V."/>
            <person name="Reese M.G."/>
            <person name="Reinert K."/>
            <person name="Remington K."/>
            <person name="Saunders R.D.C."/>
            <person name="Scheeler F."/>
            <person name="Shen H."/>
            <person name="Shue B.C."/>
            <person name="Siden-Kiamos I."/>
            <person name="Simpson M."/>
            <person name="Skupski M.P."/>
            <person name="Smith T.J."/>
            <person name="Spier E."/>
            <person name="Spradling A.C."/>
            <person name="Stapleton M."/>
            <person name="Strong R."/>
            <person name="Sun E."/>
            <person name="Svirskas R."/>
            <person name="Tector C."/>
            <person name="Turner R."/>
            <person name="Venter E."/>
            <person name="Wang A.H."/>
            <person name="Wang X."/>
            <person name="Wang Z.-Y."/>
            <person name="Wassarman D.A."/>
            <person name="Weinstock G.M."/>
            <person name="Weissenbach J."/>
            <person name="Williams S.M."/>
            <person name="Woodage T."/>
            <person name="Worley K.C."/>
            <person name="Wu D."/>
            <person name="Yang S."/>
            <person name="Yao Q.A."/>
            <person name="Ye J."/>
            <person name="Yeh R.-F."/>
            <person name="Zaveri J.S."/>
            <person name="Zhan M."/>
            <person name="Zhang G."/>
            <person name="Zhao Q."/>
            <person name="Zheng L."/>
            <person name="Zheng X.H."/>
            <person name="Zhong F.N."/>
            <person name="Zhong W."/>
            <person name="Zhou X."/>
            <person name="Zhu S.C."/>
            <person name="Zhu X."/>
            <person name="Smith H.O."/>
            <person name="Gibbs R.A."/>
            <person name="Myers E.W."/>
            <person name="Rubin G.M."/>
            <person name="Venter J.C."/>
        </authorList>
    </citation>
    <scope>NUCLEOTIDE SEQUENCE [LARGE SCALE GENOMIC DNA]</scope>
    <source>
        <strain>Berkeley</strain>
    </source>
</reference>
<reference key="2">
    <citation type="journal article" date="2002" name="Genome Biol.">
        <title>Annotation of the Drosophila melanogaster euchromatic genome: a systematic review.</title>
        <authorList>
            <person name="Misra S."/>
            <person name="Crosby M.A."/>
            <person name="Mungall C.J."/>
            <person name="Matthews B.B."/>
            <person name="Campbell K.S."/>
            <person name="Hradecky P."/>
            <person name="Huang Y."/>
            <person name="Kaminker J.S."/>
            <person name="Millburn G.H."/>
            <person name="Prochnik S.E."/>
            <person name="Smith C.D."/>
            <person name="Tupy J.L."/>
            <person name="Whitfield E.J."/>
            <person name="Bayraktaroglu L."/>
            <person name="Berman B.P."/>
            <person name="Bettencourt B.R."/>
            <person name="Celniker S.E."/>
            <person name="de Grey A.D.N.J."/>
            <person name="Drysdale R.A."/>
            <person name="Harris N.L."/>
            <person name="Richter J."/>
            <person name="Russo S."/>
            <person name="Schroeder A.J."/>
            <person name="Shu S.Q."/>
            <person name="Stapleton M."/>
            <person name="Yamada C."/>
            <person name="Ashburner M."/>
            <person name="Gelbart W.M."/>
            <person name="Rubin G.M."/>
            <person name="Lewis S.E."/>
        </authorList>
    </citation>
    <scope>GENOME REANNOTATION</scope>
    <source>
        <strain>Berkeley</strain>
    </source>
</reference>
<reference key="3">
    <citation type="submission" date="2004-04" db="EMBL/GenBank/DDBJ databases">
        <authorList>
            <person name="Stapleton M."/>
            <person name="Carlson J.W."/>
            <person name="Chavez C."/>
            <person name="Frise E."/>
            <person name="George R.A."/>
            <person name="Pacleb J.M."/>
            <person name="Park S."/>
            <person name="Wan K.H."/>
            <person name="Yu C."/>
            <person name="Rubin G.M."/>
            <person name="Celniker S.E."/>
        </authorList>
    </citation>
    <scope>NUCLEOTIDE SEQUENCE [LARGE SCALE MRNA]</scope>
    <source>
        <strain>Berkeley</strain>
        <tissue>Head</tissue>
    </source>
</reference>
<reference key="4">
    <citation type="journal article" date="1999" name="Curr. Biol.">
        <title>The COP9 signalosome is essential for development of Drosophila melanogaster.</title>
        <authorList>
            <person name="Freilich S."/>
            <person name="Oron E."/>
            <person name="Kapp Y."/>
            <person name="Nevo-Caspi Y."/>
            <person name="Orgad S."/>
            <person name="Segal D."/>
            <person name="Chamovitz D.A."/>
        </authorList>
    </citation>
    <scope>IDENTIFICATION</scope>
    <scope>SUBCELLULAR LOCATION</scope>
    <scope>PROBABLE COMPOSITION OF THE CSN COMPLEX</scope>
    <scope>INTERACTION WITH CSN2 AND CSN4</scope>
</reference>
<reference key="5">
    <citation type="journal article" date="2003" name="Dev. Cell">
        <title>The COP9 signalosome promotes degradation of Cyclin E during early Drosophila oogenesis.</title>
        <authorList>
            <person name="Doronkin S."/>
            <person name="Djagaeva I."/>
            <person name="Beckendorf S.K."/>
        </authorList>
    </citation>
    <scope>FUNCTION OF CSN COMPLEX</scope>
</reference>
<reference key="6">
    <citation type="journal article" date="2008" name="J. Proteome Res.">
        <title>Phosphoproteome analysis of Drosophila melanogaster embryos.</title>
        <authorList>
            <person name="Zhai B."/>
            <person name="Villen J."/>
            <person name="Beausoleil S.A."/>
            <person name="Mintseris J."/>
            <person name="Gygi S.P."/>
        </authorList>
    </citation>
    <scope>PHOSPHORYLATION [LARGE SCALE ANALYSIS] AT SER-233; SER-235; SER-238 AND SER-249</scope>
    <scope>IDENTIFICATION BY MASS SPECTROMETRY</scope>
    <source>
        <tissue>Embryo</tissue>
    </source>
</reference>
<name>CSN7_DROME</name>
<evidence type="ECO:0000255" key="1">
    <source>
        <dbReference type="PROSITE-ProRule" id="PRU01185"/>
    </source>
</evidence>
<evidence type="ECO:0000256" key="2">
    <source>
        <dbReference type="SAM" id="MobiDB-lite"/>
    </source>
</evidence>
<evidence type="ECO:0000269" key="3">
    <source>
    </source>
</evidence>
<evidence type="ECO:0000269" key="4">
    <source>
    </source>
</evidence>
<evidence type="ECO:0000269" key="5">
    <source>
    </source>
</evidence>
<evidence type="ECO:0000305" key="6"/>
<evidence type="ECO:0000305" key="7">
    <source>
    </source>
</evidence>
<gene>
    <name type="primary">CSN7</name>
    <name type="ORF">CG2038</name>
</gene>
<protein>
    <recommendedName>
        <fullName>COP9 signalosome complex subunit 7</fullName>
        <shortName>Dch7</shortName>
        <shortName>Signalosome subunit 7</shortName>
    </recommendedName>
</protein>